<organism>
    <name type="scientific">Aspergillus clavatus (strain ATCC 1007 / CBS 513.65 / DSM 816 / NCTC 3887 / NRRL 1 / QM 1276 / 107)</name>
    <dbReference type="NCBI Taxonomy" id="344612"/>
    <lineage>
        <taxon>Eukaryota</taxon>
        <taxon>Fungi</taxon>
        <taxon>Dikarya</taxon>
        <taxon>Ascomycota</taxon>
        <taxon>Pezizomycotina</taxon>
        <taxon>Eurotiomycetes</taxon>
        <taxon>Eurotiomycetidae</taxon>
        <taxon>Eurotiales</taxon>
        <taxon>Aspergillaceae</taxon>
        <taxon>Aspergillus</taxon>
        <taxon>Aspergillus subgen. Fumigati</taxon>
    </lineage>
</organism>
<comment type="function">
    <text evidence="1">Hydrolyzes a variety of simple alpha-D-galactoside as well as more complex molecules such as oligosaccharides and polysaccharides.</text>
</comment>
<comment type="catalytic activity">
    <reaction>
        <text>Hydrolysis of terminal, non-reducing alpha-D-galactose residues in alpha-D-galactosides, including galactose oligosaccharides, galactomannans and galactolipids.</text>
        <dbReference type="EC" id="3.2.1.22"/>
    </reaction>
</comment>
<comment type="subcellular location">
    <subcellularLocation>
        <location evidence="3">Secreted</location>
    </subcellularLocation>
</comment>
<comment type="similarity">
    <text evidence="3">Belongs to the glycosyl hydrolase 27 family.</text>
</comment>
<accession>A1C5D3</accession>
<evidence type="ECO:0000250" key="1"/>
<evidence type="ECO:0000255" key="2"/>
<evidence type="ECO:0000305" key="3"/>
<protein>
    <recommendedName>
        <fullName>Probable alpha-galactosidase B</fullName>
        <ecNumber>3.2.1.22</ecNumber>
    </recommendedName>
    <alternativeName>
        <fullName>Melibiase B</fullName>
    </alternativeName>
</protein>
<proteinExistence type="inferred from homology"/>
<sequence>MSRFHLPLAAAVVLVSCLWSANALVRPDGVGKLPALGWNSWNAFGCDIDDAKIMTAAKEIVNLGLKDLGYEYINIDDCWSVKSGRDKTTKRIVPDPAKFPDGIAGVADRIHDLGLKVGIYSSAGLTTCAGYPASLGYEEIDAQTFAEWGIDYLKYDNCGVPSNWTDAYTFCVPDPGSASTNGTCPDNENPAPQGYDWSTSLTAQRHQRMRDALLGVEHTIFYSLCEWGQADVSAWGNATGNSWRMSGDITPSWDRIAAIANENSFLLNHVDFWGHSDPDMLEVGNGDLTLAENRAHFALWAAMKSPLIIGTALDGIDPAHLEILLNKYLIAFHQDPVIGRPAYPYKWGYSPDWTFDPAHPAEYWSGPSSTLDGTLVLMLNSEGSRQTRTAVWKEIPELKDALGRKGRRQTGFRVTDVWTGKDLGCVRDHYTVTLESHDVAALLVGKGC</sequence>
<gene>
    <name type="primary">aglB</name>
    <name type="ORF">ACLA_003130</name>
</gene>
<keyword id="KW-1015">Disulfide bond</keyword>
<keyword id="KW-0325">Glycoprotein</keyword>
<keyword id="KW-0326">Glycosidase</keyword>
<keyword id="KW-0378">Hydrolase</keyword>
<keyword id="KW-1185">Reference proteome</keyword>
<keyword id="KW-0964">Secreted</keyword>
<keyword id="KW-0732">Signal</keyword>
<name>AGALB_ASPCL</name>
<feature type="signal peptide" evidence="2">
    <location>
        <begin position="1"/>
        <end position="23"/>
    </location>
</feature>
<feature type="chain" id="PRO_0000393214" description="Probable alpha-galactosidase B">
    <location>
        <begin position="24"/>
        <end position="448"/>
    </location>
</feature>
<feature type="active site" description="Nucleophile" evidence="1">
    <location>
        <position position="156"/>
    </location>
</feature>
<feature type="active site" description="Proton donor" evidence="1">
    <location>
        <position position="248"/>
    </location>
</feature>
<feature type="binding site" evidence="1">
    <location>
        <begin position="226"/>
        <end position="230"/>
    </location>
    <ligand>
        <name>substrate</name>
    </ligand>
</feature>
<feature type="glycosylation site" description="N-linked (GlcNAc...) asparagine" evidence="2">
    <location>
        <position position="163"/>
    </location>
</feature>
<feature type="glycosylation site" description="N-linked (GlcNAc...) asparagine" evidence="2">
    <location>
        <position position="181"/>
    </location>
</feature>
<feature type="glycosylation site" description="N-linked (GlcNAc...) asparagine" evidence="2">
    <location>
        <position position="237"/>
    </location>
</feature>
<feature type="disulfide bond" evidence="1">
    <location>
        <begin position="46"/>
        <end position="78"/>
    </location>
</feature>
<feature type="disulfide bond" evidence="1">
    <location>
        <begin position="128"/>
        <end position="158"/>
    </location>
</feature>
<reference key="1">
    <citation type="journal article" date="2008" name="PLoS Genet.">
        <title>Genomic islands in the pathogenic filamentous fungus Aspergillus fumigatus.</title>
        <authorList>
            <person name="Fedorova N.D."/>
            <person name="Khaldi N."/>
            <person name="Joardar V.S."/>
            <person name="Maiti R."/>
            <person name="Amedeo P."/>
            <person name="Anderson M.J."/>
            <person name="Crabtree J."/>
            <person name="Silva J.C."/>
            <person name="Badger J.H."/>
            <person name="Albarraq A."/>
            <person name="Angiuoli S."/>
            <person name="Bussey H."/>
            <person name="Bowyer P."/>
            <person name="Cotty P.J."/>
            <person name="Dyer P.S."/>
            <person name="Egan A."/>
            <person name="Galens K."/>
            <person name="Fraser-Liggett C.M."/>
            <person name="Haas B.J."/>
            <person name="Inman J.M."/>
            <person name="Kent R."/>
            <person name="Lemieux S."/>
            <person name="Malavazi I."/>
            <person name="Orvis J."/>
            <person name="Roemer T."/>
            <person name="Ronning C.M."/>
            <person name="Sundaram J.P."/>
            <person name="Sutton G."/>
            <person name="Turner G."/>
            <person name="Venter J.C."/>
            <person name="White O.R."/>
            <person name="Whitty B.R."/>
            <person name="Youngman P."/>
            <person name="Wolfe K.H."/>
            <person name="Goldman G.H."/>
            <person name="Wortman J.R."/>
            <person name="Jiang B."/>
            <person name="Denning D.W."/>
            <person name="Nierman W.C."/>
        </authorList>
    </citation>
    <scope>NUCLEOTIDE SEQUENCE [LARGE SCALE GENOMIC DNA]</scope>
    <source>
        <strain>ATCC 1007 / CBS 513.65 / DSM 816 / NCTC 3887 / NRRL 1 / QM 1276 / 107</strain>
    </source>
</reference>
<dbReference type="EC" id="3.2.1.22"/>
<dbReference type="EMBL" id="DS027004">
    <property type="protein sequence ID" value="EAW14901.1"/>
    <property type="molecule type" value="Genomic_DNA"/>
</dbReference>
<dbReference type="RefSeq" id="XP_001276327.1">
    <property type="nucleotide sequence ID" value="XM_001276326.1"/>
</dbReference>
<dbReference type="SMR" id="A1C5D3"/>
<dbReference type="STRING" id="344612.A1C5D3"/>
<dbReference type="GlyCosmos" id="A1C5D3">
    <property type="glycosylation" value="3 sites, No reported glycans"/>
</dbReference>
<dbReference type="EnsemblFungi" id="EAW14901">
    <property type="protein sequence ID" value="EAW14901"/>
    <property type="gene ID" value="ACLA_003130"/>
</dbReference>
<dbReference type="GeneID" id="4708471"/>
<dbReference type="KEGG" id="act:ACLA_003130"/>
<dbReference type="VEuPathDB" id="FungiDB:ACLA_003130"/>
<dbReference type="eggNOG" id="KOG2366">
    <property type="taxonomic scope" value="Eukaryota"/>
</dbReference>
<dbReference type="HOGENOM" id="CLU_013093_2_2_1"/>
<dbReference type="OMA" id="MTPTMGW"/>
<dbReference type="OrthoDB" id="5795902at2759"/>
<dbReference type="Proteomes" id="UP000006701">
    <property type="component" value="Unassembled WGS sequence"/>
</dbReference>
<dbReference type="GO" id="GO:0005576">
    <property type="term" value="C:extracellular region"/>
    <property type="evidence" value="ECO:0007669"/>
    <property type="project" value="UniProtKB-SubCell"/>
</dbReference>
<dbReference type="GO" id="GO:0004557">
    <property type="term" value="F:alpha-galactosidase activity"/>
    <property type="evidence" value="ECO:0007669"/>
    <property type="project" value="UniProtKB-EC"/>
</dbReference>
<dbReference type="GO" id="GO:0005975">
    <property type="term" value="P:carbohydrate metabolic process"/>
    <property type="evidence" value="ECO:0007669"/>
    <property type="project" value="InterPro"/>
</dbReference>
<dbReference type="CDD" id="cd14792">
    <property type="entry name" value="GH27"/>
    <property type="match status" value="1"/>
</dbReference>
<dbReference type="FunFam" id="2.60.40.1180:FF:000049">
    <property type="entry name" value="Alpha-galactosidase"/>
    <property type="match status" value="1"/>
</dbReference>
<dbReference type="Gene3D" id="3.20.20.70">
    <property type="entry name" value="Aldolase class I"/>
    <property type="match status" value="1"/>
</dbReference>
<dbReference type="Gene3D" id="2.60.40.1180">
    <property type="entry name" value="Golgi alpha-mannosidase II"/>
    <property type="match status" value="1"/>
</dbReference>
<dbReference type="InterPro" id="IPR013785">
    <property type="entry name" value="Aldolase_TIM"/>
</dbReference>
<dbReference type="InterPro" id="IPR002241">
    <property type="entry name" value="Glyco_hydro_27"/>
</dbReference>
<dbReference type="InterPro" id="IPR000111">
    <property type="entry name" value="Glyco_hydro_27/36_CS"/>
</dbReference>
<dbReference type="InterPro" id="IPR013780">
    <property type="entry name" value="Glyco_hydro_b"/>
</dbReference>
<dbReference type="InterPro" id="IPR017853">
    <property type="entry name" value="Glycoside_hydrolase_SF"/>
</dbReference>
<dbReference type="InterPro" id="IPR041233">
    <property type="entry name" value="Melibiase_C"/>
</dbReference>
<dbReference type="PANTHER" id="PTHR11452:SF61">
    <property type="entry name" value="ALPHA-GALACTOSIDASE B-RELATED"/>
    <property type="match status" value="1"/>
</dbReference>
<dbReference type="PANTHER" id="PTHR11452">
    <property type="entry name" value="ALPHA-GALACTOSIDASE/ALPHA-N-ACETYLGALACTOSAMINIDASE"/>
    <property type="match status" value="1"/>
</dbReference>
<dbReference type="Pfam" id="PF16499">
    <property type="entry name" value="Melibiase_2"/>
    <property type="match status" value="2"/>
</dbReference>
<dbReference type="Pfam" id="PF17801">
    <property type="entry name" value="Melibiase_C"/>
    <property type="match status" value="1"/>
</dbReference>
<dbReference type="PRINTS" id="PR00740">
    <property type="entry name" value="GLHYDRLASE27"/>
</dbReference>
<dbReference type="SUPFAM" id="SSF51445">
    <property type="entry name" value="(Trans)glycosidases"/>
    <property type="match status" value="1"/>
</dbReference>
<dbReference type="SUPFAM" id="SSF51011">
    <property type="entry name" value="Glycosyl hydrolase domain"/>
    <property type="match status" value="1"/>
</dbReference>
<dbReference type="PROSITE" id="PS00512">
    <property type="entry name" value="ALPHA_GALACTOSIDASE"/>
    <property type="match status" value="1"/>
</dbReference>